<feature type="chain" id="PRO_1000074010" description="Octanoyltransferase">
    <location>
        <begin position="1"/>
        <end position="233"/>
    </location>
</feature>
<feature type="domain" description="BPL/LPL catalytic" evidence="2">
    <location>
        <begin position="34"/>
        <end position="214"/>
    </location>
</feature>
<feature type="active site" description="Acyl-thioester intermediate" evidence="1">
    <location>
        <position position="175"/>
    </location>
</feature>
<feature type="binding site" evidence="1">
    <location>
        <begin position="72"/>
        <end position="79"/>
    </location>
    <ligand>
        <name>substrate</name>
    </ligand>
</feature>
<feature type="binding site" evidence="1">
    <location>
        <begin position="144"/>
        <end position="146"/>
    </location>
    <ligand>
        <name>substrate</name>
    </ligand>
</feature>
<feature type="binding site" evidence="1">
    <location>
        <begin position="157"/>
        <end position="159"/>
    </location>
    <ligand>
        <name>substrate</name>
    </ligand>
</feature>
<feature type="site" description="Lowers pKa of active site Cys" evidence="1">
    <location>
        <position position="141"/>
    </location>
</feature>
<protein>
    <recommendedName>
        <fullName evidence="1">Octanoyltransferase</fullName>
        <ecNumber evidence="1">2.3.1.181</ecNumber>
    </recommendedName>
    <alternativeName>
        <fullName evidence="1">Lipoate-protein ligase B</fullName>
    </alternativeName>
    <alternativeName>
        <fullName evidence="1">Lipoyl/octanoyl transferase</fullName>
    </alternativeName>
    <alternativeName>
        <fullName evidence="1">Octanoyl-[acyl-carrier-protein]-protein N-octanoyltransferase</fullName>
    </alternativeName>
</protein>
<comment type="function">
    <text evidence="1">Catalyzes the transfer of endogenously produced octanoic acid from octanoyl-acyl-carrier-protein onto the lipoyl domains of lipoate-dependent enzymes. Lipoyl-ACP can also act as a substrate although octanoyl-ACP is likely to be the physiological substrate.</text>
</comment>
<comment type="catalytic activity">
    <reaction evidence="1">
        <text>octanoyl-[ACP] + L-lysyl-[protein] = N(6)-octanoyl-L-lysyl-[protein] + holo-[ACP] + H(+)</text>
        <dbReference type="Rhea" id="RHEA:17665"/>
        <dbReference type="Rhea" id="RHEA-COMP:9636"/>
        <dbReference type="Rhea" id="RHEA-COMP:9685"/>
        <dbReference type="Rhea" id="RHEA-COMP:9752"/>
        <dbReference type="Rhea" id="RHEA-COMP:9928"/>
        <dbReference type="ChEBI" id="CHEBI:15378"/>
        <dbReference type="ChEBI" id="CHEBI:29969"/>
        <dbReference type="ChEBI" id="CHEBI:64479"/>
        <dbReference type="ChEBI" id="CHEBI:78463"/>
        <dbReference type="ChEBI" id="CHEBI:78809"/>
        <dbReference type="EC" id="2.3.1.181"/>
    </reaction>
</comment>
<comment type="pathway">
    <text evidence="1">Protein modification; protein lipoylation via endogenous pathway; protein N(6)-(lipoyl)lysine from octanoyl-[acyl-carrier-protein]: step 1/2.</text>
</comment>
<comment type="subcellular location">
    <subcellularLocation>
        <location evidence="1">Cytoplasm</location>
    </subcellularLocation>
</comment>
<comment type="miscellaneous">
    <text evidence="1">In the reaction, the free carboxyl group of octanoic acid is attached via an amide linkage to the epsilon-amino group of a specific lysine residue of lipoyl domains of lipoate-dependent enzymes.</text>
</comment>
<comment type="similarity">
    <text evidence="1">Belongs to the LipB family.</text>
</comment>
<proteinExistence type="inferred from homology"/>
<evidence type="ECO:0000255" key="1">
    <source>
        <dbReference type="HAMAP-Rule" id="MF_00013"/>
    </source>
</evidence>
<evidence type="ECO:0000255" key="2">
    <source>
        <dbReference type="PROSITE-ProRule" id="PRU01067"/>
    </source>
</evidence>
<name>LIPB_RENSM</name>
<reference key="1">
    <citation type="journal article" date="2008" name="J. Bacteriol.">
        <title>Genome sequence of the fish pathogen Renibacterium salmoninarum suggests reductive evolution away from an environmental Arthrobacter ancestor.</title>
        <authorList>
            <person name="Wiens G.D."/>
            <person name="Rockey D.D."/>
            <person name="Wu Z."/>
            <person name="Chang J."/>
            <person name="Levy R."/>
            <person name="Crane S."/>
            <person name="Chen D.S."/>
            <person name="Capri G.R."/>
            <person name="Burnett J.R."/>
            <person name="Sudheesh P.S."/>
            <person name="Schipma M.J."/>
            <person name="Burd H."/>
            <person name="Bhattacharyya A."/>
            <person name="Rhodes L.D."/>
            <person name="Kaul R."/>
            <person name="Strom M.S."/>
        </authorList>
    </citation>
    <scope>NUCLEOTIDE SEQUENCE [LARGE SCALE GENOMIC DNA]</scope>
    <source>
        <strain>ATCC 33209 / DSM 20767 / JCM 11484 / NBRC 15589 / NCIMB 2235</strain>
    </source>
</reference>
<organism>
    <name type="scientific">Renibacterium salmoninarum (strain ATCC 33209 / DSM 20767 / JCM 11484 / NBRC 15589 / NCIMB 2235)</name>
    <dbReference type="NCBI Taxonomy" id="288705"/>
    <lineage>
        <taxon>Bacteria</taxon>
        <taxon>Bacillati</taxon>
        <taxon>Actinomycetota</taxon>
        <taxon>Actinomycetes</taxon>
        <taxon>Micrococcales</taxon>
        <taxon>Micrococcaceae</taxon>
        <taxon>Renibacterium</taxon>
    </lineage>
</organism>
<keyword id="KW-0012">Acyltransferase</keyword>
<keyword id="KW-0963">Cytoplasm</keyword>
<keyword id="KW-1185">Reference proteome</keyword>
<keyword id="KW-0808">Transferase</keyword>
<sequence>MMLEFSEVRLAPNFVDYMQAWEMQQKLHDAVVEGQAPSTVLLLEHAAVYTAGKRTEDHERPFDGTPVIPVDRGGKLTWHGPGQLVGYPIIALADPHAIREYVATLEDILIAVLAQFGIKGERVDGRAGIWLLADAKGPTRKIAAIGIRVHNGVTMHGFSLNCDNDLAPYGQIIACGITDAGATTMELETGRNISPAQVLPHIIKEFSAREATLIGAPAHEAVVPARATEGATQ</sequence>
<dbReference type="EC" id="2.3.1.181" evidence="1"/>
<dbReference type="EMBL" id="CP000910">
    <property type="protein sequence ID" value="ABY24168.1"/>
    <property type="molecule type" value="Genomic_DNA"/>
</dbReference>
<dbReference type="RefSeq" id="WP_012245831.1">
    <property type="nucleotide sequence ID" value="NC_010168.1"/>
</dbReference>
<dbReference type="SMR" id="A9WS39"/>
<dbReference type="STRING" id="288705.RSal33209_2442"/>
<dbReference type="KEGG" id="rsa:RSal33209_2442"/>
<dbReference type="eggNOG" id="COG0321">
    <property type="taxonomic scope" value="Bacteria"/>
</dbReference>
<dbReference type="HOGENOM" id="CLU_035168_2_1_11"/>
<dbReference type="UniPathway" id="UPA00538">
    <property type="reaction ID" value="UER00592"/>
</dbReference>
<dbReference type="Proteomes" id="UP000002007">
    <property type="component" value="Chromosome"/>
</dbReference>
<dbReference type="GO" id="GO:0005737">
    <property type="term" value="C:cytoplasm"/>
    <property type="evidence" value="ECO:0007669"/>
    <property type="project" value="UniProtKB-SubCell"/>
</dbReference>
<dbReference type="GO" id="GO:0033819">
    <property type="term" value="F:lipoyl(octanoyl) transferase activity"/>
    <property type="evidence" value="ECO:0007669"/>
    <property type="project" value="UniProtKB-EC"/>
</dbReference>
<dbReference type="GO" id="GO:0036211">
    <property type="term" value="P:protein modification process"/>
    <property type="evidence" value="ECO:0007669"/>
    <property type="project" value="InterPro"/>
</dbReference>
<dbReference type="CDD" id="cd16444">
    <property type="entry name" value="LipB"/>
    <property type="match status" value="1"/>
</dbReference>
<dbReference type="Gene3D" id="3.30.930.10">
    <property type="entry name" value="Bira Bifunctional Protein, Domain 2"/>
    <property type="match status" value="1"/>
</dbReference>
<dbReference type="HAMAP" id="MF_00013">
    <property type="entry name" value="LipB"/>
    <property type="match status" value="1"/>
</dbReference>
<dbReference type="InterPro" id="IPR045864">
    <property type="entry name" value="aa-tRNA-synth_II/BPL/LPL"/>
</dbReference>
<dbReference type="InterPro" id="IPR004143">
    <property type="entry name" value="BPL_LPL_catalytic"/>
</dbReference>
<dbReference type="InterPro" id="IPR000544">
    <property type="entry name" value="Octanoyltransferase"/>
</dbReference>
<dbReference type="InterPro" id="IPR020605">
    <property type="entry name" value="Octanoyltransferase_CS"/>
</dbReference>
<dbReference type="NCBIfam" id="TIGR00214">
    <property type="entry name" value="lipB"/>
    <property type="match status" value="1"/>
</dbReference>
<dbReference type="NCBIfam" id="NF010925">
    <property type="entry name" value="PRK14345.1"/>
    <property type="match status" value="1"/>
</dbReference>
<dbReference type="PANTHER" id="PTHR10993:SF7">
    <property type="entry name" value="LIPOYLTRANSFERASE 2, MITOCHONDRIAL-RELATED"/>
    <property type="match status" value="1"/>
</dbReference>
<dbReference type="PANTHER" id="PTHR10993">
    <property type="entry name" value="OCTANOYLTRANSFERASE"/>
    <property type="match status" value="1"/>
</dbReference>
<dbReference type="Pfam" id="PF21948">
    <property type="entry name" value="LplA-B_cat"/>
    <property type="match status" value="1"/>
</dbReference>
<dbReference type="PIRSF" id="PIRSF016262">
    <property type="entry name" value="LPLase"/>
    <property type="match status" value="1"/>
</dbReference>
<dbReference type="SUPFAM" id="SSF55681">
    <property type="entry name" value="Class II aaRS and biotin synthetases"/>
    <property type="match status" value="1"/>
</dbReference>
<dbReference type="PROSITE" id="PS51733">
    <property type="entry name" value="BPL_LPL_CATALYTIC"/>
    <property type="match status" value="1"/>
</dbReference>
<dbReference type="PROSITE" id="PS01313">
    <property type="entry name" value="LIPB"/>
    <property type="match status" value="1"/>
</dbReference>
<gene>
    <name evidence="1" type="primary">lipB</name>
    <name type="ordered locus">RSal33209_2442</name>
</gene>
<accession>A9WS39</accession>